<name>ARP4_YARLI</name>
<organism>
    <name type="scientific">Yarrowia lipolytica (strain CLIB 122 / E 150)</name>
    <name type="common">Yeast</name>
    <name type="synonym">Candida lipolytica</name>
    <dbReference type="NCBI Taxonomy" id="284591"/>
    <lineage>
        <taxon>Eukaryota</taxon>
        <taxon>Fungi</taxon>
        <taxon>Dikarya</taxon>
        <taxon>Ascomycota</taxon>
        <taxon>Saccharomycotina</taxon>
        <taxon>Dipodascomycetes</taxon>
        <taxon>Dipodascales</taxon>
        <taxon>Dipodascales incertae sedis</taxon>
        <taxon>Yarrowia</taxon>
    </lineage>
</organism>
<dbReference type="EMBL" id="CR382132">
    <property type="protein sequence ID" value="CAG78763.1"/>
    <property type="molecule type" value="Genomic_DNA"/>
</dbReference>
<dbReference type="RefSeq" id="XP_505951.1">
    <property type="nucleotide sequence ID" value="XM_505951.1"/>
</dbReference>
<dbReference type="SMR" id="Q6C061"/>
<dbReference type="FunCoup" id="Q6C061">
    <property type="interactions" value="330"/>
</dbReference>
<dbReference type="STRING" id="284591.Q6C061"/>
<dbReference type="EnsemblFungi" id="CAG78763">
    <property type="protein sequence ID" value="CAG78763"/>
    <property type="gene ID" value="YALI0_F27533g"/>
</dbReference>
<dbReference type="KEGG" id="yli:2909050"/>
<dbReference type="VEuPathDB" id="FungiDB:YALI0_F27533g"/>
<dbReference type="HOGENOM" id="CLU_027965_6_2_1"/>
<dbReference type="InParanoid" id="Q6C061"/>
<dbReference type="OMA" id="MTEAPWN"/>
<dbReference type="OrthoDB" id="2225at4891"/>
<dbReference type="Proteomes" id="UP000001300">
    <property type="component" value="Chromosome F"/>
</dbReference>
<dbReference type="GO" id="GO:0035267">
    <property type="term" value="C:NuA4 histone acetyltransferase complex"/>
    <property type="evidence" value="ECO:0000318"/>
    <property type="project" value="GO_Central"/>
</dbReference>
<dbReference type="GO" id="GO:0016514">
    <property type="term" value="C:SWI/SNF complex"/>
    <property type="evidence" value="ECO:0000318"/>
    <property type="project" value="GO_Central"/>
</dbReference>
<dbReference type="GO" id="GO:0003682">
    <property type="term" value="F:chromatin binding"/>
    <property type="evidence" value="ECO:0000318"/>
    <property type="project" value="GO_Central"/>
</dbReference>
<dbReference type="GO" id="GO:0006338">
    <property type="term" value="P:chromatin remodeling"/>
    <property type="evidence" value="ECO:0000318"/>
    <property type="project" value="GO_Central"/>
</dbReference>
<dbReference type="GO" id="GO:0006281">
    <property type="term" value="P:DNA repair"/>
    <property type="evidence" value="ECO:0007669"/>
    <property type="project" value="UniProtKB-KW"/>
</dbReference>
<dbReference type="GO" id="GO:0006357">
    <property type="term" value="P:regulation of transcription by RNA polymerase II"/>
    <property type="evidence" value="ECO:0000318"/>
    <property type="project" value="GO_Central"/>
</dbReference>
<dbReference type="CDD" id="cd13395">
    <property type="entry name" value="ASKHA_NBD_Arp4_ACTL6-like"/>
    <property type="match status" value="1"/>
</dbReference>
<dbReference type="FunFam" id="3.30.420.40:FF:000058">
    <property type="entry name" value="Putative actin-related protein 5"/>
    <property type="match status" value="1"/>
</dbReference>
<dbReference type="Gene3D" id="3.30.420.40">
    <property type="match status" value="3"/>
</dbReference>
<dbReference type="Gene3D" id="3.90.640.10">
    <property type="entry name" value="Actin, Chain A, domain 4"/>
    <property type="match status" value="1"/>
</dbReference>
<dbReference type="InterPro" id="IPR004000">
    <property type="entry name" value="Actin"/>
</dbReference>
<dbReference type="InterPro" id="IPR020902">
    <property type="entry name" value="Actin/actin-like_CS"/>
</dbReference>
<dbReference type="InterPro" id="IPR043129">
    <property type="entry name" value="ATPase_NBD"/>
</dbReference>
<dbReference type="PANTHER" id="PTHR11937">
    <property type="entry name" value="ACTIN"/>
    <property type="match status" value="1"/>
</dbReference>
<dbReference type="Pfam" id="PF00022">
    <property type="entry name" value="Actin"/>
    <property type="match status" value="1"/>
</dbReference>
<dbReference type="SMART" id="SM00268">
    <property type="entry name" value="ACTIN"/>
    <property type="match status" value="1"/>
</dbReference>
<dbReference type="SUPFAM" id="SSF53067">
    <property type="entry name" value="Actin-like ATPase domain"/>
    <property type="match status" value="2"/>
</dbReference>
<dbReference type="PROSITE" id="PS01132">
    <property type="entry name" value="ACTINS_ACT_LIKE"/>
    <property type="match status" value="1"/>
</dbReference>
<proteinExistence type="inferred from homology"/>
<keyword id="KW-0010">Activator</keyword>
<keyword id="KW-0156">Chromatin regulator</keyword>
<keyword id="KW-0227">DNA damage</keyword>
<keyword id="KW-0234">DNA repair</keyword>
<keyword id="KW-0539">Nucleus</keyword>
<keyword id="KW-1185">Reference proteome</keyword>
<keyword id="KW-0804">Transcription</keyword>
<keyword id="KW-0805">Transcription regulation</keyword>
<feature type="chain" id="PRO_0000089102" description="Actin-related protein 4">
    <location>
        <begin position="1"/>
        <end position="432"/>
    </location>
</feature>
<comment type="function">
    <text evidence="1">Chromatin interaction component of the NuA4 histone acetyltransferase complex which is involved in transcriptional activation of selected genes principally by acetylation of nucleosomal histone H4 and H2A. The NuA4 complex is also involved in DNA repair. Is required for NuA4 complex integrity. Component of the SWR1 complex which mediates the ATP-dependent exchange of histone H2A for the H2A variant HZT1 leading to transcriptional regulation of selected genes by chromatin remodeling. Component of the INO80 complex which remodels chromatin by shifting nucleosomes and is involved in DNA repair (By similarity).</text>
</comment>
<comment type="subunit">
    <text evidence="1">Component of the NuA4 histone acetyltransferase complex, of the INO80 chromatin remodeling complex, and of the SWR1 chromatin remodeling complex.</text>
</comment>
<comment type="subcellular location">
    <subcellularLocation>
        <location evidence="1">Nucleus</location>
    </subcellularLocation>
</comment>
<comment type="similarity">
    <text evidence="2">Belongs to the actin family. ARP4 subfamily.</text>
</comment>
<gene>
    <name type="primary">ARP4</name>
    <name type="ordered locus">YALI0F27533g</name>
</gene>
<sequence>MTTTAPAPQVYGGDEVATLVIDTGSSYTRVGYAGEDTPKLVVSTECGLMADEDVEMEDDTSNTTKKLNKYKVGDSANLPLPNMEVLHPLTDGIVADWDAVQNIWEYSLARLNADTKTHPLMLTEPCWNTQANKLKALEIAFESLEVPASYLVKDAVASAFAAGKGNALVLDVGSEVASVTPVIDGLVLYKPARRSQYAGDYLDRQIKKVLVSRGIDLTPRFEIKNKKAVEMGEPPVFTKRELPNVTHSFTDLQVSRILSEFKDSMCQVNDVPLTPEISGEAADRVFEFPTGYSTTFGADRLSTSESLFKPSEYPFDGETVPDTARGLSEMVVDTINASNVDVRAHLANNIVITGGGSLVQGLSDRVSKDVTQALSGLKVRVAAASNQEERRHGAWIGGSVLGSLGSFHQLWVSKQEWQEKGGDYLVEKKRFK</sequence>
<accession>Q6C061</accession>
<reference key="1">
    <citation type="journal article" date="2004" name="Nature">
        <title>Genome evolution in yeasts.</title>
        <authorList>
            <person name="Dujon B."/>
            <person name="Sherman D."/>
            <person name="Fischer G."/>
            <person name="Durrens P."/>
            <person name="Casaregola S."/>
            <person name="Lafontaine I."/>
            <person name="de Montigny J."/>
            <person name="Marck C."/>
            <person name="Neuveglise C."/>
            <person name="Talla E."/>
            <person name="Goffard N."/>
            <person name="Frangeul L."/>
            <person name="Aigle M."/>
            <person name="Anthouard V."/>
            <person name="Babour A."/>
            <person name="Barbe V."/>
            <person name="Barnay S."/>
            <person name="Blanchin S."/>
            <person name="Beckerich J.-M."/>
            <person name="Beyne E."/>
            <person name="Bleykasten C."/>
            <person name="Boisrame A."/>
            <person name="Boyer J."/>
            <person name="Cattolico L."/>
            <person name="Confanioleri F."/>
            <person name="de Daruvar A."/>
            <person name="Despons L."/>
            <person name="Fabre E."/>
            <person name="Fairhead C."/>
            <person name="Ferry-Dumazet H."/>
            <person name="Groppi A."/>
            <person name="Hantraye F."/>
            <person name="Hennequin C."/>
            <person name="Jauniaux N."/>
            <person name="Joyet P."/>
            <person name="Kachouri R."/>
            <person name="Kerrest A."/>
            <person name="Koszul R."/>
            <person name="Lemaire M."/>
            <person name="Lesur I."/>
            <person name="Ma L."/>
            <person name="Muller H."/>
            <person name="Nicaud J.-M."/>
            <person name="Nikolski M."/>
            <person name="Oztas S."/>
            <person name="Ozier-Kalogeropoulos O."/>
            <person name="Pellenz S."/>
            <person name="Potier S."/>
            <person name="Richard G.-F."/>
            <person name="Straub M.-L."/>
            <person name="Suleau A."/>
            <person name="Swennen D."/>
            <person name="Tekaia F."/>
            <person name="Wesolowski-Louvel M."/>
            <person name="Westhof E."/>
            <person name="Wirth B."/>
            <person name="Zeniou-Meyer M."/>
            <person name="Zivanovic Y."/>
            <person name="Bolotin-Fukuhara M."/>
            <person name="Thierry A."/>
            <person name="Bouchier C."/>
            <person name="Caudron B."/>
            <person name="Scarpelli C."/>
            <person name="Gaillardin C."/>
            <person name="Weissenbach J."/>
            <person name="Wincker P."/>
            <person name="Souciet J.-L."/>
        </authorList>
    </citation>
    <scope>NUCLEOTIDE SEQUENCE [LARGE SCALE GENOMIC DNA]</scope>
    <source>
        <strain>CLIB 122 / E 150</strain>
    </source>
</reference>
<evidence type="ECO:0000250" key="1"/>
<evidence type="ECO:0000305" key="2"/>
<protein>
    <recommendedName>
        <fullName>Actin-related protein 4</fullName>
    </recommendedName>
    <alternativeName>
        <fullName>Actin-like protein ARP4</fullName>
        <shortName>Actin-like protein 4</shortName>
    </alternativeName>
</protein>